<organism evidence="3">
    <name type="scientific">Malva parviflora</name>
    <name type="common">Little mallow</name>
    <name type="synonym">Cheeseweed mallow</name>
    <dbReference type="NCBI Taxonomy" id="145753"/>
    <lineage>
        <taxon>Eukaryota</taxon>
        <taxon>Viridiplantae</taxon>
        <taxon>Streptophyta</taxon>
        <taxon>Embryophyta</taxon>
        <taxon>Tracheophyta</taxon>
        <taxon>Spermatophyta</taxon>
        <taxon>Magnoliopsida</taxon>
        <taxon>eudicotyledons</taxon>
        <taxon>Gunneridae</taxon>
        <taxon>Pentapetalae</taxon>
        <taxon>rosids</taxon>
        <taxon>malvids</taxon>
        <taxon>Malvales</taxon>
        <taxon>Malvaceae</taxon>
        <taxon>Malvoideae</taxon>
        <taxon>Malva</taxon>
    </lineage>
</organism>
<feature type="chain" id="PRO_0000064482" description="Antifungal protein 3">
    <location>
        <begin position="1"/>
        <end position="15" status="greater than"/>
    </location>
</feature>
<feature type="non-terminal residue" evidence="2">
    <location>
        <position position="15"/>
    </location>
</feature>
<name>AFP3_MALPA</name>
<comment type="function">
    <text evidence="1">Possesses antifungal activity against P.infestans but not F.graminearum.</text>
</comment>
<comment type="subcellular location">
    <subcellularLocation>
        <location>Secreted</location>
    </subcellularLocation>
</comment>
<comment type="miscellaneous">
    <text evidence="1">Antimicrobial activity is not affected by salt concentration.</text>
</comment>
<evidence type="ECO:0000269" key="1">
    <source>
    </source>
</evidence>
<evidence type="ECO:0000303" key="2">
    <source>
    </source>
</evidence>
<evidence type="ECO:0000305" key="3"/>
<proteinExistence type="evidence at protein level"/>
<keyword id="KW-0044">Antibiotic</keyword>
<keyword id="KW-0929">Antimicrobial</keyword>
<keyword id="KW-0903">Direct protein sequencing</keyword>
<keyword id="KW-0295">Fungicide</keyword>
<keyword id="KW-0964">Secreted</keyword>
<accession>P83137</accession>
<dbReference type="GO" id="GO:0005576">
    <property type="term" value="C:extracellular region"/>
    <property type="evidence" value="ECO:0007669"/>
    <property type="project" value="UniProtKB-SubCell"/>
</dbReference>
<dbReference type="GO" id="GO:0042742">
    <property type="term" value="P:defense response to bacterium"/>
    <property type="evidence" value="ECO:0007669"/>
    <property type="project" value="UniProtKB-KW"/>
</dbReference>
<dbReference type="GO" id="GO:0050832">
    <property type="term" value="P:defense response to fungus"/>
    <property type="evidence" value="ECO:0000314"/>
    <property type="project" value="UniProtKB"/>
</dbReference>
<dbReference type="GO" id="GO:0031640">
    <property type="term" value="P:killing of cells of another organism"/>
    <property type="evidence" value="ECO:0007669"/>
    <property type="project" value="UniProtKB-KW"/>
</dbReference>
<dbReference type="GO" id="GO:0006805">
    <property type="term" value="P:xenobiotic metabolic process"/>
    <property type="evidence" value="ECO:0000314"/>
    <property type="project" value="UniProtKB"/>
</dbReference>
<sequence length="15" mass="2016">PEDPQRRYQEEQRRE</sequence>
<reference evidence="3" key="1">
    <citation type="journal article" date="2001" name="Biochem. Biophys. Res. Commun.">
        <title>Purification and characterization of three antifungal proteins from cheeseweed (Malva parviflora).</title>
        <authorList>
            <person name="Wang X."/>
            <person name="Bunkers G.J."/>
            <person name="Walters M.R."/>
            <person name="Thoma R.S."/>
        </authorList>
    </citation>
    <scope>PROTEIN SEQUENCE</scope>
    <scope>FUNCTION</scope>
    <source>
        <tissue>Seed</tissue>
    </source>
</reference>
<protein>
    <recommendedName>
        <fullName>Antifungal protein 3</fullName>
    </recommendedName>
    <alternativeName>
        <fullName>CW-3</fullName>
    </alternativeName>
</protein>